<gene>
    <name type="primary">ADH1A</name>
    <name type="synonym">ADH1</name>
</gene>
<reference key="1">
    <citation type="journal article" date="1992" name="J. Biol. Chem.">
        <title>Alpha-isoenzyme of alcohol dehydrogenase from monkey liver. Cloning, expression, mechanism, coenzyme, and substrate specificity.</title>
        <authorList>
            <person name="Light D.R."/>
            <person name="Dennis M.S."/>
            <person name="Forsythe I.J."/>
            <person name="Liu C.C."/>
            <person name="Green D.W."/>
            <person name="Kratzer D."/>
            <person name="Plapp B.V."/>
        </authorList>
    </citation>
    <scope>NUCLEOTIDE SEQUENCE [MRNA]</scope>
    <scope>CATALYTIC ACTIVITY</scope>
    <scope>FUNCTION</scope>
    <scope>BIOPHYSICOCHEMICAL PROPERTIES</scope>
    <source>
        <tissue>Liver</tissue>
    </source>
</reference>
<organism>
    <name type="scientific">Macaca mulatta</name>
    <name type="common">Rhesus macaque</name>
    <dbReference type="NCBI Taxonomy" id="9544"/>
    <lineage>
        <taxon>Eukaryota</taxon>
        <taxon>Metazoa</taxon>
        <taxon>Chordata</taxon>
        <taxon>Craniata</taxon>
        <taxon>Vertebrata</taxon>
        <taxon>Euteleostomi</taxon>
        <taxon>Mammalia</taxon>
        <taxon>Eutheria</taxon>
        <taxon>Euarchontoglires</taxon>
        <taxon>Primates</taxon>
        <taxon>Haplorrhini</taxon>
        <taxon>Catarrhini</taxon>
        <taxon>Cercopithecidae</taxon>
        <taxon>Cercopithecinae</taxon>
        <taxon>Macaca</taxon>
    </lineage>
</organism>
<dbReference type="EC" id="1.1.1.1" evidence="3"/>
<dbReference type="EMBL" id="M81807">
    <property type="protein sequence ID" value="AAA36830.1"/>
    <property type="molecule type" value="mRNA"/>
</dbReference>
<dbReference type="PIR" id="I55359">
    <property type="entry name" value="I55359"/>
</dbReference>
<dbReference type="RefSeq" id="NP_001036230.1">
    <property type="nucleotide sequence ID" value="NM_001042765.1"/>
</dbReference>
<dbReference type="SMR" id="P28469"/>
<dbReference type="FunCoup" id="P28469">
    <property type="interactions" value="214"/>
</dbReference>
<dbReference type="STRING" id="9544.ENSMMUP00000034969"/>
<dbReference type="PaxDb" id="9544-ENSMMUP00000024652"/>
<dbReference type="GeneID" id="707682"/>
<dbReference type="KEGG" id="mcc:707682"/>
<dbReference type="CTD" id="124"/>
<dbReference type="eggNOG" id="KOG0022">
    <property type="taxonomic scope" value="Eukaryota"/>
</dbReference>
<dbReference type="InParanoid" id="P28469"/>
<dbReference type="OrthoDB" id="417550at2759"/>
<dbReference type="SABIO-RK" id="P28469"/>
<dbReference type="Proteomes" id="UP000006718">
    <property type="component" value="Unassembled WGS sequence"/>
</dbReference>
<dbReference type="GO" id="GO:0005829">
    <property type="term" value="C:cytosol"/>
    <property type="evidence" value="ECO:0000318"/>
    <property type="project" value="GO_Central"/>
</dbReference>
<dbReference type="GO" id="GO:0004022">
    <property type="term" value="F:alcohol dehydrogenase (NAD+) activity"/>
    <property type="evidence" value="ECO:0000314"/>
    <property type="project" value="UniProtKB"/>
</dbReference>
<dbReference type="GO" id="GO:0004745">
    <property type="term" value="F:all-trans-retinol dehydrogenase (NAD+) activity"/>
    <property type="evidence" value="ECO:0000318"/>
    <property type="project" value="GO_Central"/>
</dbReference>
<dbReference type="GO" id="GO:1990362">
    <property type="term" value="F:butanol dehydrogenase (NAD+) activity"/>
    <property type="evidence" value="ECO:0007669"/>
    <property type="project" value="RHEA"/>
</dbReference>
<dbReference type="GO" id="GO:0008270">
    <property type="term" value="F:zinc ion binding"/>
    <property type="evidence" value="ECO:0000318"/>
    <property type="project" value="GO_Central"/>
</dbReference>
<dbReference type="GO" id="GO:0006066">
    <property type="term" value="P:alcohol metabolic process"/>
    <property type="evidence" value="ECO:0000314"/>
    <property type="project" value="UniProtKB"/>
</dbReference>
<dbReference type="GO" id="GO:0042573">
    <property type="term" value="P:retinoic acid metabolic process"/>
    <property type="evidence" value="ECO:0000318"/>
    <property type="project" value="GO_Central"/>
</dbReference>
<dbReference type="GO" id="GO:0042572">
    <property type="term" value="P:retinol metabolic process"/>
    <property type="evidence" value="ECO:0000318"/>
    <property type="project" value="GO_Central"/>
</dbReference>
<dbReference type="GO" id="GO:1902652">
    <property type="term" value="P:secondary alcohol metabolic process"/>
    <property type="evidence" value="ECO:0000314"/>
    <property type="project" value="UniProtKB"/>
</dbReference>
<dbReference type="CDD" id="cd08299">
    <property type="entry name" value="alcohol_DH_class_I_II_IV"/>
    <property type="match status" value="1"/>
</dbReference>
<dbReference type="FunFam" id="3.40.50.720:FF:000003">
    <property type="entry name" value="S-(hydroxymethyl)glutathione dehydrogenase"/>
    <property type="match status" value="1"/>
</dbReference>
<dbReference type="FunFam" id="3.90.180.10:FF:000001">
    <property type="entry name" value="S-(hydroxymethyl)glutathione dehydrogenase"/>
    <property type="match status" value="1"/>
</dbReference>
<dbReference type="Gene3D" id="3.90.180.10">
    <property type="entry name" value="Medium-chain alcohol dehydrogenases, catalytic domain"/>
    <property type="match status" value="1"/>
</dbReference>
<dbReference type="Gene3D" id="3.40.50.720">
    <property type="entry name" value="NAD(P)-binding Rossmann-like Domain"/>
    <property type="match status" value="1"/>
</dbReference>
<dbReference type="InterPro" id="IPR013149">
    <property type="entry name" value="ADH-like_C"/>
</dbReference>
<dbReference type="InterPro" id="IPR013154">
    <property type="entry name" value="ADH-like_N"/>
</dbReference>
<dbReference type="InterPro" id="IPR002328">
    <property type="entry name" value="ADH_Zn_CS"/>
</dbReference>
<dbReference type="InterPro" id="IPR011032">
    <property type="entry name" value="GroES-like_sf"/>
</dbReference>
<dbReference type="InterPro" id="IPR036291">
    <property type="entry name" value="NAD(P)-bd_dom_sf"/>
</dbReference>
<dbReference type="InterPro" id="IPR020843">
    <property type="entry name" value="PKS_ER"/>
</dbReference>
<dbReference type="PANTHER" id="PTHR43880">
    <property type="entry name" value="ALCOHOL DEHYDROGENASE"/>
    <property type="match status" value="1"/>
</dbReference>
<dbReference type="PANTHER" id="PTHR43880:SF11">
    <property type="entry name" value="ALL-TRANS-RETINOL DEHYDROGENASE [NAD(+)] ADH1B"/>
    <property type="match status" value="1"/>
</dbReference>
<dbReference type="Pfam" id="PF08240">
    <property type="entry name" value="ADH_N"/>
    <property type="match status" value="1"/>
</dbReference>
<dbReference type="Pfam" id="PF00107">
    <property type="entry name" value="ADH_zinc_N"/>
    <property type="match status" value="1"/>
</dbReference>
<dbReference type="SMART" id="SM00829">
    <property type="entry name" value="PKS_ER"/>
    <property type="match status" value="1"/>
</dbReference>
<dbReference type="SUPFAM" id="SSF50129">
    <property type="entry name" value="GroES-like"/>
    <property type="match status" value="2"/>
</dbReference>
<dbReference type="SUPFAM" id="SSF51735">
    <property type="entry name" value="NAD(P)-binding Rossmann-fold domains"/>
    <property type="match status" value="1"/>
</dbReference>
<dbReference type="PROSITE" id="PS00059">
    <property type="entry name" value="ADH_ZINC"/>
    <property type="match status" value="1"/>
</dbReference>
<name>ADH1A_MACMU</name>
<evidence type="ECO:0000250" key="1">
    <source>
        <dbReference type="UniProtKB" id="P00325"/>
    </source>
</evidence>
<evidence type="ECO:0000250" key="2">
    <source>
        <dbReference type="UniProtKB" id="P07327"/>
    </source>
</evidence>
<evidence type="ECO:0000269" key="3">
    <source>
    </source>
</evidence>
<evidence type="ECO:0000305" key="4"/>
<evidence type="ECO:0000305" key="5">
    <source>
    </source>
</evidence>
<proteinExistence type="evidence at protein level"/>
<keyword id="KW-0007">Acetylation</keyword>
<keyword id="KW-0963">Cytoplasm</keyword>
<keyword id="KW-0479">Metal-binding</keyword>
<keyword id="KW-0520">NAD</keyword>
<keyword id="KW-0560">Oxidoreductase</keyword>
<keyword id="KW-0597">Phosphoprotein</keyword>
<keyword id="KW-1185">Reference proteome</keyword>
<keyword id="KW-0862">Zinc</keyword>
<accession>P28469</accession>
<sequence length="375" mass="39913">MSTAGKVIKCKAAVLWEVMKPFSIEDVEVAPPKAYEVRIKMVTVGICGTDDHVVSGTMVTPLPVILGHEAAGIVESVGEGVTTVEPGDKVIPLALPQCGKCRICKTPERNYCLKNDVSNPRGTLQDGTSRFTCRGKPIHHFLGVSTFSQYTVVDENAVAKIDAASPMEKVCLIGCGFSTGYGSAVKVAKVTPGSTCAVFGLGGVGLSAVMGCKAAGAARIIAVDINKDKFAKAKELGATECINPQDYKKPIQEVLKEMTDGGVDFSFEVIGRLDTMMASLLCCHEACGTSVIVGVPPDSQNLSINPMLLLTGRTWKGAVYGGFKSKEDIPKLVADFMAKKFSLDALITHVLPFEKINEGFDLLRSGKSIRTILTF</sequence>
<feature type="initiator methionine" description="Removed" evidence="2">
    <location>
        <position position="1"/>
    </location>
</feature>
<feature type="chain" id="PRO_0000160659" description="Alcohol dehydrogenase 1A">
    <location>
        <begin position="2"/>
        <end position="375"/>
    </location>
</feature>
<feature type="binding site" evidence="2">
    <location>
        <position position="47"/>
    </location>
    <ligand>
        <name>Zn(2+)</name>
        <dbReference type="ChEBI" id="CHEBI:29105"/>
        <label>1</label>
        <note>catalytic</note>
    </ligand>
</feature>
<feature type="binding site" evidence="2">
    <location>
        <begin position="48"/>
        <end position="52"/>
    </location>
    <ligand>
        <name>NAD(+)</name>
        <dbReference type="ChEBI" id="CHEBI:57540"/>
    </ligand>
</feature>
<feature type="binding site" evidence="2">
    <location>
        <position position="68"/>
    </location>
    <ligand>
        <name>Zn(2+)</name>
        <dbReference type="ChEBI" id="CHEBI:29105"/>
        <label>1</label>
        <note>catalytic</note>
    </ligand>
</feature>
<feature type="binding site" evidence="2">
    <location>
        <position position="98"/>
    </location>
    <ligand>
        <name>Zn(2+)</name>
        <dbReference type="ChEBI" id="CHEBI:29105"/>
        <label>2</label>
    </ligand>
</feature>
<feature type="binding site" evidence="2">
    <location>
        <position position="101"/>
    </location>
    <ligand>
        <name>Zn(2+)</name>
        <dbReference type="ChEBI" id="CHEBI:29105"/>
        <label>2</label>
    </ligand>
</feature>
<feature type="binding site" evidence="2">
    <location>
        <position position="104"/>
    </location>
    <ligand>
        <name>Zn(2+)</name>
        <dbReference type="ChEBI" id="CHEBI:29105"/>
        <label>2</label>
    </ligand>
</feature>
<feature type="binding site" evidence="2">
    <location>
        <position position="112"/>
    </location>
    <ligand>
        <name>Zn(2+)</name>
        <dbReference type="ChEBI" id="CHEBI:29105"/>
        <label>2</label>
    </ligand>
</feature>
<feature type="binding site" evidence="2">
    <location>
        <position position="175"/>
    </location>
    <ligand>
        <name>Zn(2+)</name>
        <dbReference type="ChEBI" id="CHEBI:29105"/>
        <label>1</label>
        <note>catalytic</note>
    </ligand>
</feature>
<feature type="binding site" evidence="2">
    <location>
        <begin position="200"/>
        <end position="205"/>
    </location>
    <ligand>
        <name>NAD(+)</name>
        <dbReference type="ChEBI" id="CHEBI:57540"/>
    </ligand>
</feature>
<feature type="binding site" evidence="2">
    <location>
        <position position="224"/>
    </location>
    <ligand>
        <name>NAD(+)</name>
        <dbReference type="ChEBI" id="CHEBI:57540"/>
    </ligand>
</feature>
<feature type="binding site" evidence="2">
    <location>
        <position position="229"/>
    </location>
    <ligand>
        <name>NAD(+)</name>
        <dbReference type="ChEBI" id="CHEBI:57540"/>
    </ligand>
</feature>
<feature type="binding site" evidence="2">
    <location>
        <position position="270"/>
    </location>
    <ligand>
        <name>NAD(+)</name>
        <dbReference type="ChEBI" id="CHEBI:57540"/>
    </ligand>
</feature>
<feature type="binding site" evidence="2">
    <location>
        <begin position="293"/>
        <end position="295"/>
    </location>
    <ligand>
        <name>NAD(+)</name>
        <dbReference type="ChEBI" id="CHEBI:57540"/>
    </ligand>
</feature>
<feature type="binding site" evidence="2">
    <location>
        <begin position="318"/>
        <end position="320"/>
    </location>
    <ligand>
        <name>NAD(+)</name>
        <dbReference type="ChEBI" id="CHEBI:57540"/>
    </ligand>
</feature>
<feature type="binding site" evidence="2">
    <location>
        <position position="370"/>
    </location>
    <ligand>
        <name>NAD(+)</name>
        <dbReference type="ChEBI" id="CHEBI:57540"/>
    </ligand>
</feature>
<feature type="modified residue" description="N-acetylserine" evidence="2">
    <location>
        <position position="2"/>
    </location>
</feature>
<feature type="modified residue" description="Phosphoserine" evidence="1">
    <location>
        <position position="23"/>
    </location>
</feature>
<feature type="modified residue" description="Phosphotyrosine" evidence="1">
    <location>
        <position position="35"/>
    </location>
</feature>
<comment type="function">
    <text evidence="3">Alcohol dehydrogenase. Oxidizes primary as well as secondary alcohols. Ethanol is a very poor substrate.</text>
</comment>
<comment type="catalytic activity">
    <reaction evidence="3">
        <text>a primary alcohol + NAD(+) = an aldehyde + NADH + H(+)</text>
        <dbReference type="Rhea" id="RHEA:10736"/>
        <dbReference type="ChEBI" id="CHEBI:15378"/>
        <dbReference type="ChEBI" id="CHEBI:15734"/>
        <dbReference type="ChEBI" id="CHEBI:17478"/>
        <dbReference type="ChEBI" id="CHEBI:57540"/>
        <dbReference type="ChEBI" id="CHEBI:57945"/>
        <dbReference type="EC" id="1.1.1.1"/>
    </reaction>
    <physiologicalReaction direction="left-to-right" evidence="5">
        <dbReference type="Rhea" id="RHEA:10737"/>
    </physiologicalReaction>
</comment>
<comment type="catalytic activity">
    <reaction evidence="3">
        <text>a secondary alcohol + NAD(+) = a ketone + NADH + H(+)</text>
        <dbReference type="Rhea" id="RHEA:10740"/>
        <dbReference type="ChEBI" id="CHEBI:15378"/>
        <dbReference type="ChEBI" id="CHEBI:17087"/>
        <dbReference type="ChEBI" id="CHEBI:35681"/>
        <dbReference type="ChEBI" id="CHEBI:57540"/>
        <dbReference type="ChEBI" id="CHEBI:57945"/>
        <dbReference type="EC" id="1.1.1.1"/>
    </reaction>
    <physiologicalReaction direction="left-to-right" evidence="5">
        <dbReference type="Rhea" id="RHEA:10741"/>
    </physiologicalReaction>
</comment>
<comment type="catalytic activity">
    <reaction evidence="3">
        <text>butan-1-ol + NAD(+) = butanal + NADH + H(+)</text>
        <dbReference type="Rhea" id="RHEA:33199"/>
        <dbReference type="ChEBI" id="CHEBI:15378"/>
        <dbReference type="ChEBI" id="CHEBI:15743"/>
        <dbReference type="ChEBI" id="CHEBI:28885"/>
        <dbReference type="ChEBI" id="CHEBI:57540"/>
        <dbReference type="ChEBI" id="CHEBI:57945"/>
    </reaction>
    <physiologicalReaction direction="left-to-right" evidence="5">
        <dbReference type="Rhea" id="RHEA:33200"/>
    </physiologicalReaction>
</comment>
<comment type="catalytic activity">
    <reaction evidence="3">
        <text>1-propanol + NAD(+) = propanal + NADH + H(+)</text>
        <dbReference type="Rhea" id="RHEA:50704"/>
        <dbReference type="ChEBI" id="CHEBI:15378"/>
        <dbReference type="ChEBI" id="CHEBI:17153"/>
        <dbReference type="ChEBI" id="CHEBI:28831"/>
        <dbReference type="ChEBI" id="CHEBI:57540"/>
        <dbReference type="ChEBI" id="CHEBI:57945"/>
    </reaction>
    <physiologicalReaction direction="left-to-right" evidence="5">
        <dbReference type="Rhea" id="RHEA:50705"/>
    </physiologicalReaction>
</comment>
<comment type="catalytic activity">
    <reaction evidence="3">
        <text>propan-2-ol + NAD(+) = acetone + NADH + H(+)</text>
        <dbReference type="Rhea" id="RHEA:41984"/>
        <dbReference type="ChEBI" id="CHEBI:15347"/>
        <dbReference type="ChEBI" id="CHEBI:15378"/>
        <dbReference type="ChEBI" id="CHEBI:17824"/>
        <dbReference type="ChEBI" id="CHEBI:57540"/>
        <dbReference type="ChEBI" id="CHEBI:57945"/>
    </reaction>
    <physiologicalReaction direction="left-to-right" evidence="5">
        <dbReference type="Rhea" id="RHEA:41985"/>
    </physiologicalReaction>
</comment>
<comment type="cofactor">
    <cofactor evidence="2">
        <name>Zn(2+)</name>
        <dbReference type="ChEBI" id="CHEBI:29105"/>
    </cofactor>
    <text evidence="2">Binds 2 Zn(2+) ions per subunit.</text>
</comment>
<comment type="biophysicochemical properties">
    <kinetics>
        <KM evidence="3">15 mM for ethanol</KM>
        <KM evidence="3">2 mM for 1-propanol</KM>
        <KM evidence="3">0.19 mM for butan-1-ol</KM>
        <KM evidence="3">0.024 mM for cyclohexanol</KM>
        <KM evidence="3">1.4 mM for (S)-2-butanol</KM>
        <KM evidence="3">0.42 mM for (R)-2-butanol</KM>
        <KM evidence="3">3.5 mM for propan-2-ol</KM>
    </kinetics>
</comment>
<comment type="subunit">
    <text evidence="2">Dimer of identical or heterodimer of closely related subunits alpha, beta, or gamma that are encoded by genes ADH1A, ADH1B, and ADH1C, respectively.</text>
</comment>
<comment type="subcellular location">
    <subcellularLocation>
        <location>Cytoplasm</location>
    </subcellularLocation>
</comment>
<comment type="similarity">
    <text evidence="4">Belongs to the zinc-containing alcohol dehydrogenase family.</text>
</comment>
<protein>
    <recommendedName>
        <fullName>Alcohol dehydrogenase 1A</fullName>
        <ecNumber evidence="3">1.1.1.1</ecNumber>
    </recommendedName>
    <alternativeName>
        <fullName>Alcohol dehydrogenase subunit alpha</fullName>
    </alternativeName>
</protein>